<dbReference type="EC" id="2.7.7.-"/>
<dbReference type="EMBL" id="L09723">
    <property type="protein sequence ID" value="AAA46709.1"/>
    <property type="molecule type" value="Genomic_DNA"/>
</dbReference>
<dbReference type="EMBL" id="L22858">
    <property type="protein sequence ID" value="AAA66644.1"/>
    <property type="molecule type" value="Genomic_DNA"/>
</dbReference>
<dbReference type="PIR" id="F72851">
    <property type="entry name" value="F72851"/>
</dbReference>
<dbReference type="KEGG" id="vg:1403846"/>
<dbReference type="OrthoDB" id="18354at10239"/>
<dbReference type="Proteomes" id="UP000008292">
    <property type="component" value="Segment"/>
</dbReference>
<dbReference type="GO" id="GO:0003677">
    <property type="term" value="F:DNA binding"/>
    <property type="evidence" value="ECO:0000314"/>
    <property type="project" value="UniProtKB"/>
</dbReference>
<dbReference type="GO" id="GO:0003899">
    <property type="term" value="F:DNA-directed RNA polymerase activity"/>
    <property type="evidence" value="ECO:0000314"/>
    <property type="project" value="UniProtKB"/>
</dbReference>
<dbReference type="GO" id="GO:0019079">
    <property type="term" value="P:viral genome replication"/>
    <property type="evidence" value="ECO:0000314"/>
    <property type="project" value="UniProtKB"/>
</dbReference>
<dbReference type="InterPro" id="IPR016658">
    <property type="entry name" value="DNA_primase_LEF1"/>
</dbReference>
<dbReference type="PIRSF" id="PIRSF016433">
    <property type="entry name" value="Viral_DNA_prim"/>
    <property type="match status" value="1"/>
</dbReference>
<dbReference type="SUPFAM" id="SSF56747">
    <property type="entry name" value="Prim-pol domain"/>
    <property type="match status" value="1"/>
</dbReference>
<gene>
    <name type="primary">LEF-1</name>
    <name type="ORF">ORF14</name>
</gene>
<sequence length="266" mass="30780">MLVCNYTQKRVDMMWDAIAYNDSRKYAFMTVNARWIHADRYFDTSAQLYSYIVQNKVSDVHVKPLDDGGGREWVVDADYKNYVDEHDLMLKIYIGATAFLLFYTEENVSRVMYTGNRGFHLWLKFTDKFKITSAQNVRVHRYKAFEKPAKLDSDYIQPGSFAHCVREAVRLYVPHMQDSNLDALTLQYWPDVDRDIFCNVNKQIRAPYSYNYKGTKFSRCITKELLDKLKQCYPGYGTGGCGPVTTTTTPSPPKIGSMQTTTKSTT</sequence>
<evidence type="ECO:0000256" key="1">
    <source>
        <dbReference type="SAM" id="MobiDB-lite"/>
    </source>
</evidence>
<evidence type="ECO:0000269" key="2">
    <source>
    </source>
</evidence>
<evidence type="ECO:0000269" key="3">
    <source>
    </source>
</evidence>
<evidence type="ECO:0000305" key="4"/>
<feature type="chain" id="PRO_0000132816" description="DNA primase">
    <location>
        <begin position="1"/>
        <end position="266"/>
    </location>
</feature>
<feature type="region of interest" description="Disordered" evidence="1">
    <location>
        <begin position="244"/>
        <end position="266"/>
    </location>
</feature>
<feature type="compositionally biased region" description="Polar residues" evidence="1">
    <location>
        <begin position="257"/>
        <end position="266"/>
    </location>
</feature>
<organism>
    <name type="scientific">Autographa californica nuclear polyhedrosis virus</name>
    <name type="common">AcMNPV</name>
    <dbReference type="NCBI Taxonomy" id="46015"/>
    <lineage>
        <taxon>Viruses</taxon>
        <taxon>Viruses incertae sedis</taxon>
        <taxon>Naldaviricetes</taxon>
        <taxon>Lefavirales</taxon>
        <taxon>Baculoviridae</taxon>
        <taxon>Alphabaculovirus</taxon>
        <taxon>Alphabaculovirus aucalifornicae</taxon>
    </lineage>
</organism>
<name>PRIM_NPVAC</name>
<organismHost>
    <name type="scientific">Lepidoptera</name>
    <name type="common">butterflies and moths</name>
    <dbReference type="NCBI Taxonomy" id="7088"/>
</organismHost>
<accession>P41417</accession>
<protein>
    <recommendedName>
        <fullName>DNA primase</fullName>
        <ecNumber>2.7.7.-</ecNumber>
    </recommendedName>
    <alternativeName>
        <fullName>Late expression factor 1</fullName>
    </alternativeName>
</protein>
<comment type="function">
    <text evidence="2 3 4">Plays an essential role in viral DNA replication. May generates single-stranded DNA for both leading and lagging strand synthesis. The primase initiates primer synthesis and thereby produces large amount of short RNA primers on the lagging strand that the polymerase elongates using dNTPs.</text>
</comment>
<comment type="subunit">
    <text evidence="3">Interacts with LEF-2.</text>
</comment>
<comment type="similarity">
    <text evidence="4">Belongs to the baculoviridae LEF-1 family.</text>
</comment>
<proteinExistence type="evidence at protein level"/>
<reference key="1">
    <citation type="journal article" date="1993" name="J. Virol.">
        <title>Identification and characterization of lef-1, a baculovirus gene involved in late and very late gene expression.</title>
        <authorList>
            <person name="Passarelli A.L."/>
            <person name="Miller L.K."/>
        </authorList>
    </citation>
    <scope>NUCLEOTIDE SEQUENCE [GENOMIC DNA]</scope>
    <source>
        <strain>L1</strain>
    </source>
</reference>
<reference key="2">
    <citation type="journal article" date="1994" name="Virology">
        <title>The complete DNA sequence of Autographa californica nuclear polyhedrosis virus.</title>
        <authorList>
            <person name="Ayres M.D."/>
            <person name="Howard S.C."/>
            <person name="Kuzio J."/>
            <person name="Lopez-Ferber M."/>
            <person name="Possee R.D."/>
        </authorList>
    </citation>
    <scope>NUCLEOTIDE SEQUENCE [LARGE SCALE GENOMIC DNA]</scope>
    <source>
        <strain>C6</strain>
    </source>
</reference>
<reference key="3">
    <citation type="journal article" date="1997" name="J. Virol.">
        <title>Characterization of the interaction between the baculovirus replication factors LEF-1 and LEF-2.</title>
        <authorList>
            <person name="Evans J.T."/>
            <person name="Leisy D.J."/>
            <person name="Rohrmann G.F."/>
        </authorList>
    </citation>
    <scope>FUNCTION</scope>
    <scope>INTERACTION WITH LEF-2</scope>
</reference>
<reference key="4">
    <citation type="journal article" date="2002" name="J. Virol.">
        <title>Baculovirus replication factor LEF-1 is a DNA primase.</title>
        <authorList>
            <person name="Mikhailov V.S."/>
            <person name="Rohrmann G.F."/>
        </authorList>
    </citation>
    <scope>FUNCTION</scope>
</reference>
<keyword id="KW-0244">Early protein</keyword>
<keyword id="KW-1185">Reference proteome</keyword>
<keyword id="KW-0804">Transcription</keyword>
<keyword id="KW-0805">Transcription regulation</keyword>
<keyword id="KW-0808">Transferase</keyword>